<accession>A7ZTU4</accession>
<feature type="chain" id="PRO_1000067723" description="ATP synthase subunit beta">
    <location>
        <begin position="1"/>
        <end position="460"/>
    </location>
</feature>
<feature type="binding site" evidence="1">
    <location>
        <begin position="150"/>
        <end position="157"/>
    </location>
    <ligand>
        <name>ATP</name>
        <dbReference type="ChEBI" id="CHEBI:30616"/>
    </ligand>
</feature>
<keyword id="KW-0066">ATP synthesis</keyword>
<keyword id="KW-0067">ATP-binding</keyword>
<keyword id="KW-0997">Cell inner membrane</keyword>
<keyword id="KW-1003">Cell membrane</keyword>
<keyword id="KW-0139">CF(1)</keyword>
<keyword id="KW-0375">Hydrogen ion transport</keyword>
<keyword id="KW-0406">Ion transport</keyword>
<keyword id="KW-0472">Membrane</keyword>
<keyword id="KW-0547">Nucleotide-binding</keyword>
<keyword id="KW-1185">Reference proteome</keyword>
<keyword id="KW-1278">Translocase</keyword>
<keyword id="KW-0813">Transport</keyword>
<organism>
    <name type="scientific">Escherichia coli O139:H28 (strain E24377A / ETEC)</name>
    <dbReference type="NCBI Taxonomy" id="331111"/>
    <lineage>
        <taxon>Bacteria</taxon>
        <taxon>Pseudomonadati</taxon>
        <taxon>Pseudomonadota</taxon>
        <taxon>Gammaproteobacteria</taxon>
        <taxon>Enterobacterales</taxon>
        <taxon>Enterobacteriaceae</taxon>
        <taxon>Escherichia</taxon>
    </lineage>
</organism>
<name>ATPB_ECO24</name>
<evidence type="ECO:0000255" key="1">
    <source>
        <dbReference type="HAMAP-Rule" id="MF_01347"/>
    </source>
</evidence>
<dbReference type="EC" id="7.1.2.2" evidence="1"/>
<dbReference type="EMBL" id="CP000800">
    <property type="protein sequence ID" value="ABV18142.1"/>
    <property type="molecule type" value="Genomic_DNA"/>
</dbReference>
<dbReference type="RefSeq" id="WP_000190506.1">
    <property type="nucleotide sequence ID" value="NC_009801.1"/>
</dbReference>
<dbReference type="SMR" id="A7ZTU4"/>
<dbReference type="GeneID" id="93778235"/>
<dbReference type="KEGG" id="ecw:EcE24377A_4247"/>
<dbReference type="HOGENOM" id="CLU_022398_0_2_6"/>
<dbReference type="Proteomes" id="UP000001122">
    <property type="component" value="Chromosome"/>
</dbReference>
<dbReference type="GO" id="GO:0005886">
    <property type="term" value="C:plasma membrane"/>
    <property type="evidence" value="ECO:0007669"/>
    <property type="project" value="UniProtKB-SubCell"/>
</dbReference>
<dbReference type="GO" id="GO:0045259">
    <property type="term" value="C:proton-transporting ATP synthase complex"/>
    <property type="evidence" value="ECO:0007669"/>
    <property type="project" value="UniProtKB-KW"/>
</dbReference>
<dbReference type="GO" id="GO:0005524">
    <property type="term" value="F:ATP binding"/>
    <property type="evidence" value="ECO:0007669"/>
    <property type="project" value="UniProtKB-UniRule"/>
</dbReference>
<dbReference type="GO" id="GO:0016887">
    <property type="term" value="F:ATP hydrolysis activity"/>
    <property type="evidence" value="ECO:0007669"/>
    <property type="project" value="InterPro"/>
</dbReference>
<dbReference type="GO" id="GO:0046933">
    <property type="term" value="F:proton-transporting ATP synthase activity, rotational mechanism"/>
    <property type="evidence" value="ECO:0007669"/>
    <property type="project" value="UniProtKB-UniRule"/>
</dbReference>
<dbReference type="CDD" id="cd18110">
    <property type="entry name" value="ATP-synt_F1_beta_C"/>
    <property type="match status" value="1"/>
</dbReference>
<dbReference type="CDD" id="cd18115">
    <property type="entry name" value="ATP-synt_F1_beta_N"/>
    <property type="match status" value="1"/>
</dbReference>
<dbReference type="CDD" id="cd01133">
    <property type="entry name" value="F1-ATPase_beta_CD"/>
    <property type="match status" value="1"/>
</dbReference>
<dbReference type="FunFam" id="1.10.1140.10:FF:000001">
    <property type="entry name" value="ATP synthase subunit beta"/>
    <property type="match status" value="1"/>
</dbReference>
<dbReference type="FunFam" id="2.40.10.170:FF:000003">
    <property type="entry name" value="ATP synthase subunit beta"/>
    <property type="match status" value="1"/>
</dbReference>
<dbReference type="FunFam" id="3.40.50.300:FF:000004">
    <property type="entry name" value="ATP synthase subunit beta"/>
    <property type="match status" value="1"/>
</dbReference>
<dbReference type="Gene3D" id="2.40.10.170">
    <property type="match status" value="1"/>
</dbReference>
<dbReference type="Gene3D" id="1.10.1140.10">
    <property type="entry name" value="Bovine Mitochondrial F1-atpase, Atp Synthase Beta Chain, Chain D, domain 3"/>
    <property type="match status" value="1"/>
</dbReference>
<dbReference type="Gene3D" id="3.40.50.300">
    <property type="entry name" value="P-loop containing nucleotide triphosphate hydrolases"/>
    <property type="match status" value="1"/>
</dbReference>
<dbReference type="HAMAP" id="MF_01347">
    <property type="entry name" value="ATP_synth_beta_bact"/>
    <property type="match status" value="1"/>
</dbReference>
<dbReference type="InterPro" id="IPR003593">
    <property type="entry name" value="AAA+_ATPase"/>
</dbReference>
<dbReference type="InterPro" id="IPR055190">
    <property type="entry name" value="ATP-synt_VA_C"/>
</dbReference>
<dbReference type="InterPro" id="IPR005722">
    <property type="entry name" value="ATP_synth_F1_bsu"/>
</dbReference>
<dbReference type="InterPro" id="IPR020003">
    <property type="entry name" value="ATPase_a/bsu_AS"/>
</dbReference>
<dbReference type="InterPro" id="IPR050053">
    <property type="entry name" value="ATPase_alpha/beta_chains"/>
</dbReference>
<dbReference type="InterPro" id="IPR004100">
    <property type="entry name" value="ATPase_F1/V1/A1_a/bsu_N"/>
</dbReference>
<dbReference type="InterPro" id="IPR036121">
    <property type="entry name" value="ATPase_F1/V1/A1_a/bsu_N_sf"/>
</dbReference>
<dbReference type="InterPro" id="IPR000194">
    <property type="entry name" value="ATPase_F1/V1/A1_a/bsu_nucl-bd"/>
</dbReference>
<dbReference type="InterPro" id="IPR024034">
    <property type="entry name" value="ATPase_F1/V1_b/a_C"/>
</dbReference>
<dbReference type="InterPro" id="IPR027417">
    <property type="entry name" value="P-loop_NTPase"/>
</dbReference>
<dbReference type="NCBIfam" id="TIGR01039">
    <property type="entry name" value="atpD"/>
    <property type="match status" value="1"/>
</dbReference>
<dbReference type="PANTHER" id="PTHR15184">
    <property type="entry name" value="ATP SYNTHASE"/>
    <property type="match status" value="1"/>
</dbReference>
<dbReference type="PANTHER" id="PTHR15184:SF71">
    <property type="entry name" value="ATP SYNTHASE SUBUNIT BETA, MITOCHONDRIAL"/>
    <property type="match status" value="1"/>
</dbReference>
<dbReference type="Pfam" id="PF00006">
    <property type="entry name" value="ATP-synt_ab"/>
    <property type="match status" value="1"/>
</dbReference>
<dbReference type="Pfam" id="PF02874">
    <property type="entry name" value="ATP-synt_ab_N"/>
    <property type="match status" value="1"/>
</dbReference>
<dbReference type="Pfam" id="PF22919">
    <property type="entry name" value="ATP-synt_VA_C"/>
    <property type="match status" value="1"/>
</dbReference>
<dbReference type="SMART" id="SM00382">
    <property type="entry name" value="AAA"/>
    <property type="match status" value="1"/>
</dbReference>
<dbReference type="SUPFAM" id="SSF47917">
    <property type="entry name" value="C-terminal domain of alpha and beta subunits of F1 ATP synthase"/>
    <property type="match status" value="1"/>
</dbReference>
<dbReference type="SUPFAM" id="SSF50615">
    <property type="entry name" value="N-terminal domain of alpha and beta subunits of F1 ATP synthase"/>
    <property type="match status" value="1"/>
</dbReference>
<dbReference type="SUPFAM" id="SSF52540">
    <property type="entry name" value="P-loop containing nucleoside triphosphate hydrolases"/>
    <property type="match status" value="1"/>
</dbReference>
<dbReference type="PROSITE" id="PS00152">
    <property type="entry name" value="ATPASE_ALPHA_BETA"/>
    <property type="match status" value="1"/>
</dbReference>
<protein>
    <recommendedName>
        <fullName evidence="1">ATP synthase subunit beta</fullName>
        <ecNumber evidence="1">7.1.2.2</ecNumber>
    </recommendedName>
    <alternativeName>
        <fullName evidence="1">ATP synthase F1 sector subunit beta</fullName>
    </alternativeName>
    <alternativeName>
        <fullName evidence="1">F-ATPase subunit beta</fullName>
    </alternativeName>
</protein>
<proteinExistence type="inferred from homology"/>
<gene>
    <name evidence="1" type="primary">atpD</name>
    <name type="ordered locus">EcE24377A_4247</name>
</gene>
<reference key="1">
    <citation type="journal article" date="2008" name="J. Bacteriol.">
        <title>The pangenome structure of Escherichia coli: comparative genomic analysis of E. coli commensal and pathogenic isolates.</title>
        <authorList>
            <person name="Rasko D.A."/>
            <person name="Rosovitz M.J."/>
            <person name="Myers G.S.A."/>
            <person name="Mongodin E.F."/>
            <person name="Fricke W.F."/>
            <person name="Gajer P."/>
            <person name="Crabtree J."/>
            <person name="Sebaihia M."/>
            <person name="Thomson N.R."/>
            <person name="Chaudhuri R."/>
            <person name="Henderson I.R."/>
            <person name="Sperandio V."/>
            <person name="Ravel J."/>
        </authorList>
    </citation>
    <scope>NUCLEOTIDE SEQUENCE [LARGE SCALE GENOMIC DNA]</scope>
    <source>
        <strain>E24377A / ETEC</strain>
    </source>
</reference>
<comment type="function">
    <text evidence="1">Produces ATP from ADP in the presence of a proton gradient across the membrane. The catalytic sites are hosted primarily by the beta subunits.</text>
</comment>
<comment type="catalytic activity">
    <reaction evidence="1">
        <text>ATP + H2O + 4 H(+)(in) = ADP + phosphate + 5 H(+)(out)</text>
        <dbReference type="Rhea" id="RHEA:57720"/>
        <dbReference type="ChEBI" id="CHEBI:15377"/>
        <dbReference type="ChEBI" id="CHEBI:15378"/>
        <dbReference type="ChEBI" id="CHEBI:30616"/>
        <dbReference type="ChEBI" id="CHEBI:43474"/>
        <dbReference type="ChEBI" id="CHEBI:456216"/>
        <dbReference type="EC" id="7.1.2.2"/>
    </reaction>
</comment>
<comment type="subunit">
    <text evidence="1">F-type ATPases have 2 components, CF(1) - the catalytic core - and CF(0) - the membrane proton channel. CF(1) has five subunits: alpha(3), beta(3), gamma(1), delta(1), epsilon(1). CF(0) has three main subunits: a(1), b(2) and c(9-12). The alpha and beta chains form an alternating ring which encloses part of the gamma chain. CF(1) is attached to CF(0) by a central stalk formed by the gamma and epsilon chains, while a peripheral stalk is formed by the delta and b chains.</text>
</comment>
<comment type="subcellular location">
    <subcellularLocation>
        <location evidence="1">Cell inner membrane</location>
        <topology evidence="1">Peripheral membrane protein</topology>
    </subcellularLocation>
</comment>
<comment type="similarity">
    <text evidence="1">Belongs to the ATPase alpha/beta chains family.</text>
</comment>
<sequence length="460" mass="50325">MATGKIVQVIGAVVDVEFPQDAVPRVYDALEVQNGNERLVLEVQQQLGGGIVRTIAMGSSDGLRRGLDVKDLEHPIEVPVGKATLGRIMNVLGEPVDMKGEIGEEERWAIHRAAPSYEELSNSQELLETGIKVIDLMCPFAKGGKVGLFGGAGVGKTVNMMELIRNIAIEHSGYSVFAGVGERTREGNDFYHEMTDSNVIDKVSLVYGQMNEPPGNRLRVALTGLTMAEKFRDEGRDVLLFVDNIYRYTLAGTEVSALLGRMPSAVGYQPTLAEEMGVLQERITSTKTGSITSVQAVYVPADDLTDPSPATTFAHLDATVVLSRQIASLGIYPAVDPLDSTSRQLDPLVVGQEHYDTARGVQSILQRYQELKDIIAILGMDELSEEDKLVVARARKIQRFLSQPFFVAEVFTGSPGKYVSLKDTIRGFKGIMEGEYDHLPEQAFYMVGSIEEAVEKAKKL</sequence>